<sequence>MLKMNLANLQLFAHKKGGGSTSNGRDSQAKRLGAKAADGQTVTGGSILYRQRGTHIYPGVNVGRGGDDTLFAKVEGVVRFERKGRDKKQVSVYPIAK</sequence>
<protein>
    <recommendedName>
        <fullName evidence="2">Large ribosomal subunit protein bL27</fullName>
    </recommendedName>
    <alternativeName>
        <fullName evidence="4">50S ribosomal protein L27</fullName>
    </alternativeName>
</protein>
<organism>
    <name type="scientific">Streptococcus gordonii (strain Challis / ATCC 35105 / BCRC 15272 / CH1 / DL1 / V288)</name>
    <dbReference type="NCBI Taxonomy" id="467705"/>
    <lineage>
        <taxon>Bacteria</taxon>
        <taxon>Bacillati</taxon>
        <taxon>Bacillota</taxon>
        <taxon>Bacilli</taxon>
        <taxon>Lactobacillales</taxon>
        <taxon>Streptococcaceae</taxon>
        <taxon>Streptococcus</taxon>
    </lineage>
</organism>
<reference key="1">
    <citation type="journal article" date="2007" name="J. Bacteriol.">
        <title>Genome-wide transcriptional changes in Streptococcus gordonii in response to competence signaling peptide.</title>
        <authorList>
            <person name="Vickerman M.M."/>
            <person name="Iobst S."/>
            <person name="Jesionowski A.M."/>
            <person name="Gill S.R."/>
        </authorList>
    </citation>
    <scope>NUCLEOTIDE SEQUENCE [LARGE SCALE GENOMIC DNA]</scope>
    <source>
        <strain>Challis / ATCC 35105 / BCRC 15272 / CH1 / DL1 / V288</strain>
    </source>
</reference>
<gene>
    <name evidence="2" type="primary">rpmA</name>
    <name type="ordered locus">SGO_0820</name>
</gene>
<comment type="PTM">
    <text evidence="1">The N-terminus is cleaved by ribosomal processing cysteine protease Prp.</text>
</comment>
<comment type="similarity">
    <text evidence="2">Belongs to the bacterial ribosomal protein bL27 family.</text>
</comment>
<proteinExistence type="inferred from homology"/>
<feature type="propeptide" id="PRO_0000459949" evidence="1">
    <location>
        <begin position="1"/>
        <end position="12"/>
    </location>
</feature>
<feature type="chain" id="PRO_1000081918" description="Large ribosomal subunit protein bL27">
    <location>
        <begin position="13"/>
        <end position="97"/>
    </location>
</feature>
<feature type="region of interest" description="Disordered" evidence="3">
    <location>
        <begin position="14"/>
        <end position="37"/>
    </location>
</feature>
<evidence type="ECO:0000250" key="1">
    <source>
        <dbReference type="UniProtKB" id="Q2FXT0"/>
    </source>
</evidence>
<evidence type="ECO:0000255" key="2">
    <source>
        <dbReference type="HAMAP-Rule" id="MF_00539"/>
    </source>
</evidence>
<evidence type="ECO:0000256" key="3">
    <source>
        <dbReference type="SAM" id="MobiDB-lite"/>
    </source>
</evidence>
<evidence type="ECO:0000305" key="4"/>
<accession>A8AWF9</accession>
<name>RL27_STRGC</name>
<keyword id="KW-1185">Reference proteome</keyword>
<keyword id="KW-0687">Ribonucleoprotein</keyword>
<keyword id="KW-0689">Ribosomal protein</keyword>
<dbReference type="EMBL" id="CP000725">
    <property type="protein sequence ID" value="ABV09571.1"/>
    <property type="molecule type" value="Genomic_DNA"/>
</dbReference>
<dbReference type="RefSeq" id="WP_003032879.1">
    <property type="nucleotide sequence ID" value="NC_009785.1"/>
</dbReference>
<dbReference type="SMR" id="A8AWF9"/>
<dbReference type="STRING" id="467705.SGO_0820"/>
<dbReference type="GeneID" id="93963341"/>
<dbReference type="KEGG" id="sgo:SGO_0820"/>
<dbReference type="eggNOG" id="COG0211">
    <property type="taxonomic scope" value="Bacteria"/>
</dbReference>
<dbReference type="HOGENOM" id="CLU_095424_4_0_9"/>
<dbReference type="Proteomes" id="UP000001131">
    <property type="component" value="Chromosome"/>
</dbReference>
<dbReference type="GO" id="GO:0022625">
    <property type="term" value="C:cytosolic large ribosomal subunit"/>
    <property type="evidence" value="ECO:0007669"/>
    <property type="project" value="TreeGrafter"/>
</dbReference>
<dbReference type="GO" id="GO:0003735">
    <property type="term" value="F:structural constituent of ribosome"/>
    <property type="evidence" value="ECO:0007669"/>
    <property type="project" value="InterPro"/>
</dbReference>
<dbReference type="GO" id="GO:0006412">
    <property type="term" value="P:translation"/>
    <property type="evidence" value="ECO:0007669"/>
    <property type="project" value="UniProtKB-UniRule"/>
</dbReference>
<dbReference type="FunFam" id="2.40.50.100:FF:000004">
    <property type="entry name" value="50S ribosomal protein L27"/>
    <property type="match status" value="1"/>
</dbReference>
<dbReference type="Gene3D" id="2.40.50.100">
    <property type="match status" value="1"/>
</dbReference>
<dbReference type="HAMAP" id="MF_00539">
    <property type="entry name" value="Ribosomal_bL27"/>
    <property type="match status" value="1"/>
</dbReference>
<dbReference type="InterPro" id="IPR001684">
    <property type="entry name" value="Ribosomal_bL27"/>
</dbReference>
<dbReference type="InterPro" id="IPR018261">
    <property type="entry name" value="Ribosomal_bL27_CS"/>
</dbReference>
<dbReference type="NCBIfam" id="TIGR00062">
    <property type="entry name" value="L27"/>
    <property type="match status" value="1"/>
</dbReference>
<dbReference type="PANTHER" id="PTHR15893:SF0">
    <property type="entry name" value="LARGE RIBOSOMAL SUBUNIT PROTEIN BL27M"/>
    <property type="match status" value="1"/>
</dbReference>
<dbReference type="PANTHER" id="PTHR15893">
    <property type="entry name" value="RIBOSOMAL PROTEIN L27"/>
    <property type="match status" value="1"/>
</dbReference>
<dbReference type="Pfam" id="PF01016">
    <property type="entry name" value="Ribosomal_L27"/>
    <property type="match status" value="1"/>
</dbReference>
<dbReference type="PRINTS" id="PR00063">
    <property type="entry name" value="RIBOSOMALL27"/>
</dbReference>
<dbReference type="SUPFAM" id="SSF110324">
    <property type="entry name" value="Ribosomal L27 protein-like"/>
    <property type="match status" value="1"/>
</dbReference>
<dbReference type="PROSITE" id="PS00831">
    <property type="entry name" value="RIBOSOMAL_L27"/>
    <property type="match status" value="1"/>
</dbReference>